<accession>Q8GKZ1</accession>
<sequence length="167" mass="17305">IAGCQNVVLCSPPPIADEILYAAQLCGVQEIFNVGGAQAIAALAFGSESVPKVDKIFGPGNAFVTEAKRQVSQRLDGAAIDMPAGPSEVLVIADSGATPDFVASDLLSQAEHGPDSQVILLTPDADIARKVAEAVERQLAELPRADTARQALSASRLIVTKDLAQCV</sequence>
<reference key="1">
    <citation type="journal article" date="2002" name="Infect. Genet. Evol.">
        <title>Salmonella typhi, the causative agent of typhoid fever, is approximately 50,000 years old.</title>
        <authorList>
            <person name="Kidgell C."/>
            <person name="Reichard U."/>
            <person name="Wain J."/>
            <person name="Linz B."/>
            <person name="Torpdahl M."/>
            <person name="Dougan G."/>
            <person name="Achtman M."/>
        </authorList>
    </citation>
    <scope>NUCLEOTIDE SEQUENCE [GENOMIC DNA]</scope>
</reference>
<gene>
    <name type="primary">hisD</name>
</gene>
<proteinExistence type="inferred from homology"/>
<evidence type="ECO:0000250" key="1"/>
<evidence type="ECO:0000305" key="2"/>
<comment type="function">
    <text evidence="1">Catalyzes the sequential NAD-dependent oxidations of L-histidinol to L-histidinaldehyde and then to L-histidine.</text>
</comment>
<comment type="catalytic activity">
    <reaction>
        <text>L-histidinol + 2 NAD(+) + H2O = L-histidine + 2 NADH + 3 H(+)</text>
        <dbReference type="Rhea" id="RHEA:20641"/>
        <dbReference type="ChEBI" id="CHEBI:15377"/>
        <dbReference type="ChEBI" id="CHEBI:15378"/>
        <dbReference type="ChEBI" id="CHEBI:57540"/>
        <dbReference type="ChEBI" id="CHEBI:57595"/>
        <dbReference type="ChEBI" id="CHEBI:57699"/>
        <dbReference type="ChEBI" id="CHEBI:57945"/>
        <dbReference type="EC" id="1.1.1.23"/>
    </reaction>
</comment>
<comment type="cofactor">
    <cofactor evidence="1">
        <name>Zn(2+)</name>
        <dbReference type="ChEBI" id="CHEBI:29105"/>
    </cofactor>
    <text evidence="1">Binds 1 zinc ion per subunit.</text>
</comment>
<comment type="pathway">
    <text>Amino-acid biosynthesis; L-histidine biosynthesis; L-histidine from 5-phospho-alpha-D-ribose 1-diphosphate: step 9/9.</text>
</comment>
<comment type="subunit">
    <text evidence="1">Homodimer.</text>
</comment>
<comment type="similarity">
    <text evidence="2">Belongs to the histidinol dehydrogenase family.</text>
</comment>
<protein>
    <recommendedName>
        <fullName>Histidinol dehydrogenase</fullName>
        <shortName>HDH</shortName>
        <ecNumber>1.1.1.23</ecNumber>
    </recommendedName>
</protein>
<feature type="chain" id="PRO_0000135837" description="Histidinol dehydrogenase">
    <location>
        <begin position="1" status="less than"/>
        <end position="167" status="greater than"/>
    </location>
</feature>
<feature type="binding site" evidence="1">
    <location>
        <position position="109"/>
    </location>
    <ligand>
        <name>Zn(2+)</name>
        <dbReference type="ChEBI" id="CHEBI:29105"/>
    </ligand>
</feature>
<feature type="binding site" evidence="1">
    <location>
        <position position="112"/>
    </location>
    <ligand>
        <name>Zn(2+)</name>
        <dbReference type="ChEBI" id="CHEBI:29105"/>
    </ligand>
</feature>
<feature type="non-terminal residue">
    <location>
        <position position="1"/>
    </location>
</feature>
<feature type="non-terminal residue">
    <location>
        <position position="167"/>
    </location>
</feature>
<keyword id="KW-0028">Amino-acid biosynthesis</keyword>
<keyword id="KW-0368">Histidine biosynthesis</keyword>
<keyword id="KW-0479">Metal-binding</keyword>
<keyword id="KW-0520">NAD</keyword>
<keyword id="KW-0560">Oxidoreductase</keyword>
<keyword id="KW-0862">Zinc</keyword>
<name>HISX_SALEN</name>
<organism>
    <name type="scientific">Salmonella enteritidis</name>
    <dbReference type="NCBI Taxonomy" id="149539"/>
    <lineage>
        <taxon>Bacteria</taxon>
        <taxon>Pseudomonadati</taxon>
        <taxon>Pseudomonadota</taxon>
        <taxon>Gammaproteobacteria</taxon>
        <taxon>Enterobacterales</taxon>
        <taxon>Enterobacteriaceae</taxon>
        <taxon>Salmonella</taxon>
    </lineage>
</organism>
<dbReference type="EC" id="1.1.1.23"/>
<dbReference type="EMBL" id="AY142224">
    <property type="protein sequence ID" value="AAN39859.1"/>
    <property type="molecule type" value="Genomic_DNA"/>
</dbReference>
<dbReference type="SMR" id="Q8GKZ1"/>
<dbReference type="UniPathway" id="UPA00031">
    <property type="reaction ID" value="UER00014"/>
</dbReference>
<dbReference type="GO" id="GO:0005829">
    <property type="term" value="C:cytosol"/>
    <property type="evidence" value="ECO:0007669"/>
    <property type="project" value="TreeGrafter"/>
</dbReference>
<dbReference type="GO" id="GO:0004399">
    <property type="term" value="F:histidinol dehydrogenase activity"/>
    <property type="evidence" value="ECO:0007669"/>
    <property type="project" value="UniProtKB-EC"/>
</dbReference>
<dbReference type="GO" id="GO:0046872">
    <property type="term" value="F:metal ion binding"/>
    <property type="evidence" value="ECO:0007669"/>
    <property type="project" value="UniProtKB-KW"/>
</dbReference>
<dbReference type="GO" id="GO:0051287">
    <property type="term" value="F:NAD binding"/>
    <property type="evidence" value="ECO:0007669"/>
    <property type="project" value="InterPro"/>
</dbReference>
<dbReference type="GO" id="GO:0000105">
    <property type="term" value="P:L-histidine biosynthetic process"/>
    <property type="evidence" value="ECO:0007669"/>
    <property type="project" value="UniProtKB-UniPathway"/>
</dbReference>
<dbReference type="FunFam" id="3.40.50.1980:FF:000001">
    <property type="entry name" value="Histidinol dehydrogenase"/>
    <property type="match status" value="1"/>
</dbReference>
<dbReference type="Gene3D" id="3.40.50.1980">
    <property type="entry name" value="Nitrogenase molybdenum iron protein domain"/>
    <property type="match status" value="1"/>
</dbReference>
<dbReference type="InterPro" id="IPR016161">
    <property type="entry name" value="Ald_DH/histidinol_DH"/>
</dbReference>
<dbReference type="InterPro" id="IPR001692">
    <property type="entry name" value="Histidinol_DH_CS"/>
</dbReference>
<dbReference type="InterPro" id="IPR012131">
    <property type="entry name" value="Hstdl_DH"/>
</dbReference>
<dbReference type="PANTHER" id="PTHR21256:SF2">
    <property type="entry name" value="HISTIDINE BIOSYNTHESIS TRIFUNCTIONAL PROTEIN"/>
    <property type="match status" value="1"/>
</dbReference>
<dbReference type="PANTHER" id="PTHR21256">
    <property type="entry name" value="HISTIDINOL DEHYDROGENASE HDH"/>
    <property type="match status" value="1"/>
</dbReference>
<dbReference type="Pfam" id="PF00815">
    <property type="entry name" value="Histidinol_dh"/>
    <property type="match status" value="1"/>
</dbReference>
<dbReference type="PRINTS" id="PR00083">
    <property type="entry name" value="HOLDHDRGNASE"/>
</dbReference>
<dbReference type="SUPFAM" id="SSF53720">
    <property type="entry name" value="ALDH-like"/>
    <property type="match status" value="1"/>
</dbReference>
<dbReference type="PROSITE" id="PS00611">
    <property type="entry name" value="HISOL_DEHYDROGENASE"/>
    <property type="match status" value="1"/>
</dbReference>